<dbReference type="EMBL" id="L07625">
    <property type="protein sequence ID" value="AAA43940.1"/>
    <property type="molecule type" value="Genomic_RNA"/>
</dbReference>
<dbReference type="Proteomes" id="UP000007428">
    <property type="component" value="Segment"/>
</dbReference>
<dbReference type="GO" id="GO:0044196">
    <property type="term" value="C:host cell nucleolus"/>
    <property type="evidence" value="ECO:0007669"/>
    <property type="project" value="UniProtKB-SubCell"/>
</dbReference>
<dbReference type="GO" id="GO:0003723">
    <property type="term" value="F:RNA binding"/>
    <property type="evidence" value="ECO:0007669"/>
    <property type="project" value="UniProtKB-KW"/>
</dbReference>
<dbReference type="GO" id="GO:0001070">
    <property type="term" value="F:RNA-binding transcription regulator activity"/>
    <property type="evidence" value="ECO:0007669"/>
    <property type="project" value="InterPro"/>
</dbReference>
<dbReference type="GO" id="GO:0050434">
    <property type="term" value="P:positive regulation of viral transcription"/>
    <property type="evidence" value="ECO:0007669"/>
    <property type="project" value="InterPro"/>
</dbReference>
<dbReference type="Gene3D" id="4.10.20.10">
    <property type="entry name" value="Tat domain"/>
    <property type="match status" value="1"/>
</dbReference>
<dbReference type="InterPro" id="IPR001831">
    <property type="entry name" value="IV_Tat"/>
</dbReference>
<dbReference type="InterPro" id="IPR036963">
    <property type="entry name" value="Tat_dom_sf"/>
</dbReference>
<dbReference type="Pfam" id="PF00539">
    <property type="entry name" value="Tat"/>
    <property type="match status" value="1"/>
</dbReference>
<dbReference type="PRINTS" id="PR00055">
    <property type="entry name" value="HIVTATDOMAIN"/>
</dbReference>
<sequence>MEIPLQEQESSLKSSSEPSSSTSEPVVNTQGSDNQGEEILSQLYRPLEACDNKCYCKKCCYHCQLCFLKKGLGIWYDHSRKRSSKRAKVTASSASDESLSANTGDSQPTKKQKTKVETKGLTDLGPGR</sequence>
<organism>
    <name type="scientific">Human immunodeficiency virus type 2 subtype B (isolate UC1)</name>
    <name type="common">HIV-2</name>
    <dbReference type="NCBI Taxonomy" id="388822"/>
    <lineage>
        <taxon>Viruses</taxon>
        <taxon>Riboviria</taxon>
        <taxon>Pararnavirae</taxon>
        <taxon>Artverviricota</taxon>
        <taxon>Revtraviricetes</taxon>
        <taxon>Ortervirales</taxon>
        <taxon>Retroviridae</taxon>
        <taxon>Orthoretrovirinae</taxon>
        <taxon>Lentivirus</taxon>
        <taxon>Human immunodeficiency virus 2</taxon>
    </lineage>
</organism>
<organismHost>
    <name type="scientific">Homo sapiens</name>
    <name type="common">Human</name>
    <dbReference type="NCBI Taxonomy" id="9606"/>
</organismHost>
<keyword id="KW-0010">Activator</keyword>
<keyword id="KW-0014">AIDS</keyword>
<keyword id="KW-0025">Alternative splicing</keyword>
<keyword id="KW-1048">Host nucleus</keyword>
<keyword id="KW-0945">Host-virus interaction</keyword>
<keyword id="KW-0597">Phosphoprotein</keyword>
<keyword id="KW-0694">RNA-binding</keyword>
<keyword id="KW-0804">Transcription</keyword>
<keyword id="KW-0805">Transcription regulation</keyword>
<comment type="function">
    <text evidence="2">Transcriptional activator that increases RNA Pol II processivity, thereby increasing the level of full-length viral transcripts. Recognizes a hairpin structure at the 5'-LTR of the nascent viral mRNAs referred to as the transactivation responsive RNA element (TAR) and recruits the cyclin T1-CDK9 complex (P-TEFb complex) that will in turn hyperphosphorylate the RNA polymerase II to allow efficient elongation. The CDK9 component of P-TEFb and other Tat-activated kinases hyperphosphorylate the C-terminus of RNA Pol II that becomes stabilized and much more processive.</text>
</comment>
<comment type="function">
    <text evidence="1">Extracellular circulating Tat can be endocytosed by surrounding uninfected cells via the binding to several surface receptors. Endosomal low pH allows Tat to cross the endosome membrane to enter the cytosol and eventually further translocate into the nucleus, thereby inducing severe cell dysfunctions ranging from cell activation to cell death. Through (By similarity).</text>
</comment>
<comment type="subunit">
    <text evidence="1">Interacts with host CCNT1. Associates with the P-TEFb complex composed at least of Tat, P-TEFb (CDK9 and CCNT1), TAR RNA, RNA Pol II. Interacts with CCNT2; the resulting complex is unable to bind to TAR RNA (By similarity).</text>
</comment>
<comment type="subcellular location">
    <subcellularLocation>
        <location evidence="1">Host nucleus</location>
        <location evidence="1">Host nucleolus</location>
    </subcellularLocation>
</comment>
<comment type="alternative products">
    <event type="alternative splicing"/>
    <isoform>
        <id>Q76632-1</id>
        <name>Long</name>
        <sequence type="displayed"/>
    </isoform>
    <isoform>
        <id>Q76632-2</id>
        <name>Short</name>
        <sequence type="described" ref="VSP_022447"/>
    </isoform>
</comment>
<comment type="domain">
    <text evidence="1">The Arg-rich RNA-binding region binds the TAR RNA. This region also mediates the nuclear localization (By similarity).</text>
</comment>
<comment type="PTM">
    <text evidence="1">The phosphorylation by CDK9 does not seem to be important for transactivation function.</text>
</comment>
<comment type="miscellaneous">
    <molecule>Isoform Short</molecule>
    <text evidence="4">Expressed in the late stage of the infection cycle, when unspliced viral RNAs are exported to the cytoplasm by the viral Rev protein.</text>
</comment>
<comment type="similarity">
    <text evidence="4">Belongs to the lentiviruses Tat family.</text>
</comment>
<name>TAT_HV2UC</name>
<evidence type="ECO:0000250" key="1"/>
<evidence type="ECO:0000250" key="2">
    <source>
        <dbReference type="UniProtKB" id="P04608"/>
    </source>
</evidence>
<evidence type="ECO:0000256" key="3">
    <source>
        <dbReference type="SAM" id="MobiDB-lite"/>
    </source>
</evidence>
<evidence type="ECO:0000305" key="4"/>
<feature type="chain" id="PRO_0000244863" description="Protein Tat">
    <location>
        <begin position="1"/>
        <end position="128"/>
    </location>
</feature>
<feature type="region of interest" description="Disordered" evidence="3">
    <location>
        <begin position="1"/>
        <end position="37"/>
    </location>
</feature>
<feature type="region of interest" description="Cysteine-rich" evidence="1">
    <location>
        <begin position="50"/>
        <end position="66"/>
    </location>
</feature>
<feature type="region of interest" description="Core" evidence="1">
    <location>
        <begin position="67"/>
        <end position="77"/>
    </location>
</feature>
<feature type="region of interest" description="Disordered" evidence="3">
    <location>
        <begin position="79"/>
        <end position="128"/>
    </location>
</feature>
<feature type="short sequence motif" description="Nuclear localization signal, and RNA-binding (TAR)" evidence="1">
    <location>
        <begin position="78"/>
        <end position="88"/>
    </location>
</feature>
<feature type="compositionally biased region" description="Low complexity" evidence="3">
    <location>
        <begin position="7"/>
        <end position="24"/>
    </location>
</feature>
<feature type="compositionally biased region" description="Polar residues" evidence="3">
    <location>
        <begin position="25"/>
        <end position="34"/>
    </location>
</feature>
<feature type="compositionally biased region" description="Basic residues" evidence="3">
    <location>
        <begin position="79"/>
        <end position="88"/>
    </location>
</feature>
<feature type="compositionally biased region" description="Polar residues" evidence="3">
    <location>
        <begin position="90"/>
        <end position="109"/>
    </location>
</feature>
<feature type="modified residue" description="Phosphoserine; by host CDK9" evidence="1">
    <location>
        <position position="92"/>
    </location>
</feature>
<feature type="splice variant" id="VSP_022447" description="In isoform Short." evidence="4">
    <location>
        <begin position="98"/>
        <end position="128"/>
    </location>
</feature>
<reference key="1">
    <citation type="journal article" date="1993" name="J. Virol.">
        <title>Distinguishing features of an infectious molecular clone of the highly divergent and noncytopathic human immunodeficiency virus type 2 UC1 strain.</title>
        <authorList>
            <person name="Barnett S.W."/>
            <person name="Quiroga M."/>
            <person name="Werner A."/>
            <person name="Dina D."/>
            <person name="Levy J.A."/>
        </authorList>
    </citation>
    <scope>NUCLEOTIDE SEQUENCE [GENOMIC RNA]</scope>
</reference>
<reference key="2">
    <citation type="journal article" date="2005" name="Microbes Infect.">
        <title>Decoding Tat: the biology of HIV Tat posttranslational modifications.</title>
        <authorList>
            <person name="Hetzer C."/>
            <person name="Dormeyer W."/>
            <person name="Schnolzer M."/>
            <person name="Ott M."/>
        </authorList>
    </citation>
    <scope>REVIEW</scope>
    <scope>ALTERNATIVE SPLICING</scope>
</reference>
<proteinExistence type="inferred from homology"/>
<protein>
    <recommendedName>
        <fullName>Protein Tat</fullName>
    </recommendedName>
    <alternativeName>
        <fullName>Transactivating regulatory protein</fullName>
    </alternativeName>
</protein>
<accession>Q76632</accession>
<gene>
    <name type="primary">tat</name>
</gene>